<protein>
    <recommendedName>
        <fullName evidence="1">NH(3)-dependent NAD(+) synthetase</fullName>
        <ecNumber evidence="1">6.3.1.5</ecNumber>
    </recommendedName>
</protein>
<keyword id="KW-0067">ATP-binding</keyword>
<keyword id="KW-0436">Ligase</keyword>
<keyword id="KW-0460">Magnesium</keyword>
<keyword id="KW-0479">Metal-binding</keyword>
<keyword id="KW-0520">NAD</keyword>
<keyword id="KW-0547">Nucleotide-binding</keyword>
<keyword id="KW-1185">Reference proteome</keyword>
<feature type="chain" id="PRO_0000152164" description="NH(3)-dependent NAD(+) synthetase">
    <location>
        <begin position="1"/>
        <end position="277"/>
    </location>
</feature>
<feature type="binding site" evidence="1">
    <location>
        <begin position="46"/>
        <end position="53"/>
    </location>
    <ligand>
        <name>ATP</name>
        <dbReference type="ChEBI" id="CHEBI:30616"/>
    </ligand>
</feature>
<feature type="binding site" evidence="1">
    <location>
        <position position="52"/>
    </location>
    <ligand>
        <name>Mg(2+)</name>
        <dbReference type="ChEBI" id="CHEBI:18420"/>
    </ligand>
</feature>
<feature type="binding site" evidence="1">
    <location>
        <position position="141"/>
    </location>
    <ligand>
        <name>deamido-NAD(+)</name>
        <dbReference type="ChEBI" id="CHEBI:58437"/>
    </ligand>
</feature>
<feature type="binding site" evidence="1">
    <location>
        <position position="161"/>
    </location>
    <ligand>
        <name>ATP</name>
        <dbReference type="ChEBI" id="CHEBI:30616"/>
    </ligand>
</feature>
<feature type="binding site" evidence="1">
    <location>
        <position position="166"/>
    </location>
    <ligand>
        <name>Mg(2+)</name>
        <dbReference type="ChEBI" id="CHEBI:18420"/>
    </ligand>
</feature>
<feature type="binding site" evidence="1">
    <location>
        <position position="174"/>
    </location>
    <ligand>
        <name>deamido-NAD(+)</name>
        <dbReference type="ChEBI" id="CHEBI:58437"/>
    </ligand>
</feature>
<feature type="binding site" evidence="1">
    <location>
        <position position="181"/>
    </location>
    <ligand>
        <name>deamido-NAD(+)</name>
        <dbReference type="ChEBI" id="CHEBI:58437"/>
    </ligand>
</feature>
<feature type="binding site" evidence="1">
    <location>
        <position position="190"/>
    </location>
    <ligand>
        <name>ATP</name>
        <dbReference type="ChEBI" id="CHEBI:30616"/>
    </ligand>
</feature>
<feature type="binding site" evidence="1">
    <location>
        <position position="212"/>
    </location>
    <ligand>
        <name>ATP</name>
        <dbReference type="ChEBI" id="CHEBI:30616"/>
    </ligand>
</feature>
<feature type="binding site" evidence="1">
    <location>
        <begin position="262"/>
        <end position="263"/>
    </location>
    <ligand>
        <name>deamido-NAD(+)</name>
        <dbReference type="ChEBI" id="CHEBI:58437"/>
    </ligand>
</feature>
<dbReference type="EC" id="6.3.1.5" evidence="1"/>
<dbReference type="EMBL" id="BA000035">
    <property type="protein sequence ID" value="BAC19238.1"/>
    <property type="status" value="ALT_INIT"/>
    <property type="molecule type" value="Genomic_DNA"/>
</dbReference>
<dbReference type="RefSeq" id="WP_035108878.1">
    <property type="nucleotide sequence ID" value="NC_004369.1"/>
</dbReference>
<dbReference type="SMR" id="Q8FMS2"/>
<dbReference type="STRING" id="196164.gene:10742866"/>
<dbReference type="KEGG" id="cef:CE2428"/>
<dbReference type="eggNOG" id="COG0171">
    <property type="taxonomic scope" value="Bacteria"/>
</dbReference>
<dbReference type="HOGENOM" id="CLU_059327_3_0_11"/>
<dbReference type="UniPathway" id="UPA00253">
    <property type="reaction ID" value="UER00333"/>
</dbReference>
<dbReference type="Proteomes" id="UP000001409">
    <property type="component" value="Chromosome"/>
</dbReference>
<dbReference type="GO" id="GO:0005737">
    <property type="term" value="C:cytoplasm"/>
    <property type="evidence" value="ECO:0007669"/>
    <property type="project" value="InterPro"/>
</dbReference>
<dbReference type="GO" id="GO:0005524">
    <property type="term" value="F:ATP binding"/>
    <property type="evidence" value="ECO:0007669"/>
    <property type="project" value="UniProtKB-UniRule"/>
</dbReference>
<dbReference type="GO" id="GO:0004359">
    <property type="term" value="F:glutaminase activity"/>
    <property type="evidence" value="ECO:0007669"/>
    <property type="project" value="InterPro"/>
</dbReference>
<dbReference type="GO" id="GO:0046872">
    <property type="term" value="F:metal ion binding"/>
    <property type="evidence" value="ECO:0007669"/>
    <property type="project" value="UniProtKB-KW"/>
</dbReference>
<dbReference type="GO" id="GO:0003952">
    <property type="term" value="F:NAD+ synthase (glutamine-hydrolyzing) activity"/>
    <property type="evidence" value="ECO:0007669"/>
    <property type="project" value="InterPro"/>
</dbReference>
<dbReference type="GO" id="GO:0008795">
    <property type="term" value="F:NAD+ synthase activity"/>
    <property type="evidence" value="ECO:0007669"/>
    <property type="project" value="UniProtKB-UniRule"/>
</dbReference>
<dbReference type="GO" id="GO:0009435">
    <property type="term" value="P:NAD biosynthetic process"/>
    <property type="evidence" value="ECO:0007669"/>
    <property type="project" value="UniProtKB-UniRule"/>
</dbReference>
<dbReference type="CDD" id="cd00553">
    <property type="entry name" value="NAD_synthase"/>
    <property type="match status" value="1"/>
</dbReference>
<dbReference type="Gene3D" id="3.40.50.620">
    <property type="entry name" value="HUPs"/>
    <property type="match status" value="1"/>
</dbReference>
<dbReference type="HAMAP" id="MF_00193">
    <property type="entry name" value="NadE_ammonia_dep"/>
    <property type="match status" value="1"/>
</dbReference>
<dbReference type="InterPro" id="IPR022310">
    <property type="entry name" value="NAD/GMP_synthase"/>
</dbReference>
<dbReference type="InterPro" id="IPR003694">
    <property type="entry name" value="NAD_synthase"/>
</dbReference>
<dbReference type="InterPro" id="IPR022926">
    <property type="entry name" value="NH(3)-dep_NAD(+)_synth"/>
</dbReference>
<dbReference type="InterPro" id="IPR014729">
    <property type="entry name" value="Rossmann-like_a/b/a_fold"/>
</dbReference>
<dbReference type="NCBIfam" id="TIGR00552">
    <property type="entry name" value="nadE"/>
    <property type="match status" value="1"/>
</dbReference>
<dbReference type="NCBIfam" id="NF001979">
    <property type="entry name" value="PRK00768.1"/>
    <property type="match status" value="1"/>
</dbReference>
<dbReference type="PANTHER" id="PTHR23090">
    <property type="entry name" value="NH 3 /GLUTAMINE-DEPENDENT NAD + SYNTHETASE"/>
    <property type="match status" value="1"/>
</dbReference>
<dbReference type="PANTHER" id="PTHR23090:SF7">
    <property type="entry name" value="NH(3)-DEPENDENT NAD(+) SYNTHETASE"/>
    <property type="match status" value="1"/>
</dbReference>
<dbReference type="Pfam" id="PF02540">
    <property type="entry name" value="NAD_synthase"/>
    <property type="match status" value="1"/>
</dbReference>
<dbReference type="SUPFAM" id="SSF52402">
    <property type="entry name" value="Adenine nucleotide alpha hydrolases-like"/>
    <property type="match status" value="1"/>
</dbReference>
<proteinExistence type="inferred from homology"/>
<gene>
    <name evidence="1" type="primary">nadE</name>
    <name type="ordered locus">CE2428</name>
</gene>
<accession>Q8FMS2</accession>
<evidence type="ECO:0000255" key="1">
    <source>
        <dbReference type="HAMAP-Rule" id="MF_00193"/>
    </source>
</evidence>
<evidence type="ECO:0000305" key="2"/>
<comment type="function">
    <text evidence="1">Catalyzes the ATP-dependent amidation of deamido-NAD to form NAD. Uses ammonia as a nitrogen source.</text>
</comment>
<comment type="catalytic activity">
    <reaction evidence="1">
        <text>deamido-NAD(+) + NH4(+) + ATP = AMP + diphosphate + NAD(+) + H(+)</text>
        <dbReference type="Rhea" id="RHEA:21188"/>
        <dbReference type="ChEBI" id="CHEBI:15378"/>
        <dbReference type="ChEBI" id="CHEBI:28938"/>
        <dbReference type="ChEBI" id="CHEBI:30616"/>
        <dbReference type="ChEBI" id="CHEBI:33019"/>
        <dbReference type="ChEBI" id="CHEBI:57540"/>
        <dbReference type="ChEBI" id="CHEBI:58437"/>
        <dbReference type="ChEBI" id="CHEBI:456215"/>
        <dbReference type="EC" id="6.3.1.5"/>
    </reaction>
</comment>
<comment type="pathway">
    <text evidence="1">Cofactor biosynthesis; NAD(+) biosynthesis; NAD(+) from deamido-NAD(+) (ammonia route): step 1/1.</text>
</comment>
<comment type="subunit">
    <text evidence="1">Homodimer.</text>
</comment>
<comment type="similarity">
    <text evidence="1">Belongs to the NAD synthetase family.</text>
</comment>
<comment type="sequence caution" evidence="2">
    <conflict type="erroneous initiation">
        <sequence resource="EMBL-CDS" id="BAC19238"/>
    </conflict>
</comment>
<organism>
    <name type="scientific">Corynebacterium efficiens (strain DSM 44549 / YS-314 / AJ 12310 / JCM 11189 / NBRC 100395)</name>
    <dbReference type="NCBI Taxonomy" id="196164"/>
    <lineage>
        <taxon>Bacteria</taxon>
        <taxon>Bacillati</taxon>
        <taxon>Actinomycetota</taxon>
        <taxon>Actinomycetes</taxon>
        <taxon>Mycobacteriales</taxon>
        <taxon>Corynebacteriaceae</taxon>
        <taxon>Corynebacterium</taxon>
    </lineage>
</organism>
<sequence>MTDTRDHIISQLSVVPSIEPAAEVEARVQFLVDYLRVSHARGYVLGISGGQDSTIAGRLAQLAVERIRREDGSDHQFVGVRLPHGLQADEDDALVALDFIQPDRSISINIREATDVLSAATAAALGIDELGDFNKGNVKARQRMVAQYAIAGELGLLVVGTDHAAENVTGFFTKYGDGAADVLPLAGLTKRQGALLLQHLGAPESTWTKVPTADLEEDRPALPDEEALGVTYREIDTYLENSGEVSPEAAARIEHLWKVGQHKRHMPVTPQDQWWRQ</sequence>
<reference key="1">
    <citation type="journal article" date="2003" name="Genome Res.">
        <title>Comparative complete genome sequence analysis of the amino acid replacements responsible for the thermostability of Corynebacterium efficiens.</title>
        <authorList>
            <person name="Nishio Y."/>
            <person name="Nakamura Y."/>
            <person name="Kawarabayasi Y."/>
            <person name="Usuda Y."/>
            <person name="Kimura E."/>
            <person name="Sugimoto S."/>
            <person name="Matsui K."/>
            <person name="Yamagishi A."/>
            <person name="Kikuchi H."/>
            <person name="Ikeo K."/>
            <person name="Gojobori T."/>
        </authorList>
    </citation>
    <scope>NUCLEOTIDE SEQUENCE [LARGE SCALE GENOMIC DNA]</scope>
    <source>
        <strain>DSM 44549 / YS-314 / AJ 12310 / JCM 11189 / NBRC 100395</strain>
    </source>
</reference>
<name>NADE_COREF</name>